<geneLocation type="chloroplast"/>
<gene>
    <name evidence="1" type="primary">matK</name>
</gene>
<comment type="function">
    <text evidence="1">Usually encoded in the trnK tRNA gene intron. Probably assists in splicing its own and other chloroplast group II introns.</text>
</comment>
<comment type="subcellular location">
    <subcellularLocation>
        <location>Plastid</location>
        <location>Chloroplast</location>
    </subcellularLocation>
</comment>
<comment type="similarity">
    <text evidence="1">Belongs to the intron maturase 2 family. MatK subfamily.</text>
</comment>
<accession>Q766U5</accession>
<evidence type="ECO:0000255" key="1">
    <source>
        <dbReference type="HAMAP-Rule" id="MF_01390"/>
    </source>
</evidence>
<organism>
    <name type="scientific">Avicennia marina</name>
    <name type="common">Grey mangrove</name>
    <name type="synonym">Sceura marina</name>
    <dbReference type="NCBI Taxonomy" id="82927"/>
    <lineage>
        <taxon>Eukaryota</taxon>
        <taxon>Viridiplantae</taxon>
        <taxon>Streptophyta</taxon>
        <taxon>Embryophyta</taxon>
        <taxon>Tracheophyta</taxon>
        <taxon>Spermatophyta</taxon>
        <taxon>Magnoliopsida</taxon>
        <taxon>eudicotyledons</taxon>
        <taxon>Gunneridae</taxon>
        <taxon>Pentapetalae</taxon>
        <taxon>asterids</taxon>
        <taxon>lamiids</taxon>
        <taxon>Lamiales</taxon>
        <taxon>Acanthaceae</taxon>
        <taxon>Avicennioideae</taxon>
        <taxon>Avicennia</taxon>
    </lineage>
</organism>
<protein>
    <recommendedName>
        <fullName evidence="1">Maturase K</fullName>
    </recommendedName>
    <alternativeName>
        <fullName evidence="1">Intron maturase</fullName>
    </alternativeName>
</protein>
<feature type="chain" id="PRO_0000143272" description="Maturase K">
    <location>
        <begin position="1"/>
        <end position="509"/>
    </location>
</feature>
<keyword id="KW-0150">Chloroplast</keyword>
<keyword id="KW-0507">mRNA processing</keyword>
<keyword id="KW-0934">Plastid</keyword>
<keyword id="KW-0694">RNA-binding</keyword>
<keyword id="KW-0819">tRNA processing</keyword>
<proteinExistence type="inferred from homology"/>
<sequence length="509" mass="60534">MEEIQGYLQRKRSQQQDFLYPLIFQEYIYAFAHARGFSRLILSENPGYDNKSSLLLVKRLITRMYQQNHFLICPNDSNQNPFLARNKNLYSQIISEGFAFIVEIPFSLRLISCLEVKKIVKSQTLRSIHSIFPFLEDNFSHLNFVLDVLIPHPVHVEILVQTLRYWLKDASSLHLLRFFLNEYCNWNSFILPKKDGSSFSKRNQRLFLFLYNSHVWEYESIFVFLRNQSAHLRSTSSGVLLERIYFYGKMERLVNVFVKVKDFRSNPRLIKEPCMHYIRYQRKSILASKGMSLFMNKWKCYLVTLWQWHFSLWFQPRRIYINQLANHSFEFLGYLSSVRMNPSVIRSQILENAFLINNAIKKFDTLVPIIPLIMSLAKAKFCNVLGHPISKPVWADLSDSNIIDRFRRICRNFSHYHSGSSTKRSLYQIKYILRLSCARTLARKHKSTVRVFLKRSDSELLEEFFMSEEGVLFCTFQKAFSTLRGIYRSRVWYLDIFSINDLANHKSRF</sequence>
<dbReference type="EMBL" id="AB114476">
    <property type="protein sequence ID" value="BAC82714.1"/>
    <property type="molecule type" value="Genomic_DNA"/>
</dbReference>
<dbReference type="EMBL" id="AB114477">
    <property type="protein sequence ID" value="BAC82715.1"/>
    <property type="molecule type" value="Genomic_DNA"/>
</dbReference>
<dbReference type="EMBL" id="AB114478">
    <property type="protein sequence ID" value="BAC82716.1"/>
    <property type="molecule type" value="Genomic_DNA"/>
</dbReference>
<dbReference type="EMBL" id="AB114479">
    <property type="protein sequence ID" value="BAC82717.1"/>
    <property type="molecule type" value="Genomic_DNA"/>
</dbReference>
<dbReference type="EMBL" id="AB114480">
    <property type="protein sequence ID" value="BAC82718.1"/>
    <property type="molecule type" value="Genomic_DNA"/>
</dbReference>
<dbReference type="EMBL" id="AB114481">
    <property type="protein sequence ID" value="BAC82719.1"/>
    <property type="molecule type" value="Genomic_DNA"/>
</dbReference>
<dbReference type="EMBL" id="AB114482">
    <property type="protein sequence ID" value="BAC82720.1"/>
    <property type="molecule type" value="Genomic_DNA"/>
</dbReference>
<dbReference type="EMBL" id="AB114483">
    <property type="protein sequence ID" value="BAC82721.1"/>
    <property type="molecule type" value="Genomic_DNA"/>
</dbReference>
<dbReference type="EMBL" id="AB114484">
    <property type="protein sequence ID" value="BAC82722.1"/>
    <property type="molecule type" value="Genomic_DNA"/>
</dbReference>
<dbReference type="EMBL" id="AB114485">
    <property type="protein sequence ID" value="BAC82723.1"/>
    <property type="molecule type" value="Genomic_DNA"/>
</dbReference>
<dbReference type="EMBL" id="AB114486">
    <property type="protein sequence ID" value="BAC82724.1"/>
    <property type="molecule type" value="Genomic_DNA"/>
</dbReference>
<dbReference type="EMBL" id="AB114487">
    <property type="protein sequence ID" value="BAC82725.1"/>
    <property type="molecule type" value="Genomic_DNA"/>
</dbReference>
<dbReference type="EMBL" id="AB114488">
    <property type="protein sequence ID" value="BAC82726.1"/>
    <property type="molecule type" value="Genomic_DNA"/>
</dbReference>
<dbReference type="EMBL" id="AB114489">
    <property type="protein sequence ID" value="BAC82727.1"/>
    <property type="molecule type" value="Genomic_DNA"/>
</dbReference>
<dbReference type="EMBL" id="AB114490">
    <property type="protein sequence ID" value="BAC82728.1"/>
    <property type="molecule type" value="Genomic_DNA"/>
</dbReference>
<dbReference type="EMBL" id="AB114491">
    <property type="protein sequence ID" value="BAC82729.1"/>
    <property type="molecule type" value="Genomic_DNA"/>
</dbReference>
<dbReference type="EMBL" id="AB114492">
    <property type="protein sequence ID" value="BAC82730.1"/>
    <property type="molecule type" value="Genomic_DNA"/>
</dbReference>
<dbReference type="EMBL" id="AB114493">
    <property type="protein sequence ID" value="BAC82731.1"/>
    <property type="molecule type" value="Genomic_DNA"/>
</dbReference>
<dbReference type="EMBL" id="AB114494">
    <property type="protein sequence ID" value="BAC82732.1"/>
    <property type="molecule type" value="Genomic_DNA"/>
</dbReference>
<dbReference type="EMBL" id="AB114495">
    <property type="protein sequence ID" value="BAC82733.1"/>
    <property type="molecule type" value="Genomic_DNA"/>
</dbReference>
<dbReference type="EMBL" id="AB114496">
    <property type="protein sequence ID" value="BAC82734.1"/>
    <property type="molecule type" value="Genomic_DNA"/>
</dbReference>
<dbReference type="EMBL" id="AB114497">
    <property type="protein sequence ID" value="BAC82735.1"/>
    <property type="molecule type" value="Genomic_DNA"/>
</dbReference>
<dbReference type="EMBL" id="AB114498">
    <property type="protein sequence ID" value="BAC82736.1"/>
    <property type="molecule type" value="Genomic_DNA"/>
</dbReference>
<dbReference type="EMBL" id="AB114499">
    <property type="protein sequence ID" value="BAC82737.1"/>
    <property type="molecule type" value="Genomic_DNA"/>
</dbReference>
<dbReference type="EMBL" id="AB114500">
    <property type="protein sequence ID" value="BAC82738.1"/>
    <property type="molecule type" value="Genomic_DNA"/>
</dbReference>
<dbReference type="EMBL" id="AB114501">
    <property type="protein sequence ID" value="BAC82739.1"/>
    <property type="molecule type" value="Genomic_DNA"/>
</dbReference>
<dbReference type="EMBL" id="AB114502">
    <property type="protein sequence ID" value="BAC82740.1"/>
    <property type="molecule type" value="Genomic_DNA"/>
</dbReference>
<dbReference type="EMBL" id="AB114503">
    <property type="protein sequence ID" value="BAC82741.1"/>
    <property type="molecule type" value="Genomic_DNA"/>
</dbReference>
<dbReference type="EMBL" id="AB114504">
    <property type="protein sequence ID" value="BAC82742.1"/>
    <property type="molecule type" value="Genomic_DNA"/>
</dbReference>
<dbReference type="EMBL" id="AB114505">
    <property type="protein sequence ID" value="BAC82743.1"/>
    <property type="molecule type" value="Genomic_DNA"/>
</dbReference>
<dbReference type="EMBL" id="AB114506">
    <property type="protein sequence ID" value="BAC82744.1"/>
    <property type="molecule type" value="Genomic_DNA"/>
</dbReference>
<dbReference type="EMBL" id="AB114507">
    <property type="protein sequence ID" value="BAC82745.1"/>
    <property type="molecule type" value="Genomic_DNA"/>
</dbReference>
<dbReference type="EMBL" id="AB114508">
    <property type="protein sequence ID" value="BAC82746.1"/>
    <property type="molecule type" value="Genomic_DNA"/>
</dbReference>
<dbReference type="EMBL" id="AB114509">
    <property type="protein sequence ID" value="BAC82747.1"/>
    <property type="molecule type" value="Genomic_DNA"/>
</dbReference>
<dbReference type="EMBL" id="AB114510">
    <property type="protein sequence ID" value="BAC82748.1"/>
    <property type="molecule type" value="Genomic_DNA"/>
</dbReference>
<dbReference type="EMBL" id="AB114511">
    <property type="protein sequence ID" value="BAC82749.1"/>
    <property type="molecule type" value="Genomic_DNA"/>
</dbReference>
<dbReference type="EMBL" id="AB114512">
    <property type="protein sequence ID" value="BAC82750.1"/>
    <property type="molecule type" value="Genomic_DNA"/>
</dbReference>
<dbReference type="EMBL" id="AB114513">
    <property type="protein sequence ID" value="BAC82751.1"/>
    <property type="molecule type" value="Genomic_DNA"/>
</dbReference>
<dbReference type="EMBL" id="AB114514">
    <property type="protein sequence ID" value="BAC82752.1"/>
    <property type="molecule type" value="Genomic_DNA"/>
</dbReference>
<dbReference type="EMBL" id="AB114515">
    <property type="protein sequence ID" value="BAC82753.1"/>
    <property type="molecule type" value="Genomic_DNA"/>
</dbReference>
<dbReference type="EMBL" id="AB114516">
    <property type="protein sequence ID" value="BAC82754.1"/>
    <property type="molecule type" value="Genomic_DNA"/>
</dbReference>
<dbReference type="EMBL" id="AB114517">
    <property type="protein sequence ID" value="BAC82755.1"/>
    <property type="molecule type" value="Genomic_DNA"/>
</dbReference>
<dbReference type="EMBL" id="AB114518">
    <property type="protein sequence ID" value="BAC82756.1"/>
    <property type="molecule type" value="Genomic_DNA"/>
</dbReference>
<dbReference type="EMBL" id="AB114519">
    <property type="protein sequence ID" value="BAC82757.1"/>
    <property type="molecule type" value="Genomic_DNA"/>
</dbReference>
<dbReference type="EMBL" id="AB114520">
    <property type="protein sequence ID" value="BAC82758.1"/>
    <property type="molecule type" value="Genomic_DNA"/>
</dbReference>
<dbReference type="EMBL" id="AB114521">
    <property type="protein sequence ID" value="BAC82759.1"/>
    <property type="molecule type" value="Genomic_DNA"/>
</dbReference>
<dbReference type="EMBL" id="AB114522">
    <property type="protein sequence ID" value="BAC82760.1"/>
    <property type="molecule type" value="Genomic_DNA"/>
</dbReference>
<dbReference type="EMBL" id="AB114523">
    <property type="protein sequence ID" value="BAC82761.1"/>
    <property type="molecule type" value="Genomic_DNA"/>
</dbReference>
<dbReference type="EMBL" id="AB114524">
    <property type="protein sequence ID" value="BAC82762.1"/>
    <property type="molecule type" value="Genomic_DNA"/>
</dbReference>
<dbReference type="EMBL" id="AB114525">
    <property type="protein sequence ID" value="BAC82763.1"/>
    <property type="molecule type" value="Genomic_DNA"/>
</dbReference>
<dbReference type="EMBL" id="AB114526">
    <property type="protein sequence ID" value="BAC82764.1"/>
    <property type="molecule type" value="Genomic_DNA"/>
</dbReference>
<dbReference type="EMBL" id="AB114527">
    <property type="protein sequence ID" value="BAC82765.1"/>
    <property type="molecule type" value="Genomic_DNA"/>
</dbReference>
<dbReference type="RefSeq" id="YP_009772841.1">
    <property type="nucleotide sequence ID" value="NC_047414.1"/>
</dbReference>
<dbReference type="GeneID" id="54625934"/>
<dbReference type="GO" id="GO:0009507">
    <property type="term" value="C:chloroplast"/>
    <property type="evidence" value="ECO:0007669"/>
    <property type="project" value="UniProtKB-SubCell"/>
</dbReference>
<dbReference type="GO" id="GO:0003723">
    <property type="term" value="F:RNA binding"/>
    <property type="evidence" value="ECO:0007669"/>
    <property type="project" value="UniProtKB-KW"/>
</dbReference>
<dbReference type="GO" id="GO:0006397">
    <property type="term" value="P:mRNA processing"/>
    <property type="evidence" value="ECO:0007669"/>
    <property type="project" value="UniProtKB-KW"/>
</dbReference>
<dbReference type="GO" id="GO:0008380">
    <property type="term" value="P:RNA splicing"/>
    <property type="evidence" value="ECO:0007669"/>
    <property type="project" value="UniProtKB-UniRule"/>
</dbReference>
<dbReference type="GO" id="GO:0008033">
    <property type="term" value="P:tRNA processing"/>
    <property type="evidence" value="ECO:0007669"/>
    <property type="project" value="UniProtKB-KW"/>
</dbReference>
<dbReference type="HAMAP" id="MF_01390">
    <property type="entry name" value="MatK"/>
    <property type="match status" value="1"/>
</dbReference>
<dbReference type="InterPro" id="IPR024937">
    <property type="entry name" value="Domain_X"/>
</dbReference>
<dbReference type="InterPro" id="IPR002866">
    <property type="entry name" value="Maturase_MatK"/>
</dbReference>
<dbReference type="InterPro" id="IPR024942">
    <property type="entry name" value="Maturase_MatK_N"/>
</dbReference>
<dbReference type="PANTHER" id="PTHR34811">
    <property type="entry name" value="MATURASE K"/>
    <property type="match status" value="1"/>
</dbReference>
<dbReference type="PANTHER" id="PTHR34811:SF1">
    <property type="entry name" value="MATURASE K"/>
    <property type="match status" value="1"/>
</dbReference>
<dbReference type="Pfam" id="PF01348">
    <property type="entry name" value="Intron_maturas2"/>
    <property type="match status" value="1"/>
</dbReference>
<dbReference type="Pfam" id="PF01824">
    <property type="entry name" value="MatK_N"/>
    <property type="match status" value="1"/>
</dbReference>
<name>MATK_AVIMR</name>
<reference key="1">
    <citation type="submission" date="2003-07" db="EMBL/GenBank/DDBJ databases">
        <title>Genetic structures of natural populations of mangrove species, Avicennia marina, Kandelia candel, and Lumnitzera racemosa, in Vietnam revealed by matK sequences of plastid DNA.</title>
        <authorList>
            <person name="Kado T."/>
            <person name="Fujimoto A."/>
            <person name="Giang L.H."/>
            <person name="Tuan M.S."/>
            <person name="Hong P.N."/>
            <person name="Harada K."/>
            <person name="Tachida H."/>
        </authorList>
    </citation>
    <scope>NUCLEOTIDE SEQUENCE [GENOMIC DNA]</scope>
</reference>